<accession>A5G016</accession>
<sequence>MMGPEIERLVGLMARLPGLGPRSARRIVLRLMAEREQRLLPLIAALDAACQRVAVCPVCGGLDSQQPCMICADAAREPLICVVETVADQWALERAAVYRGRYHVLGGLLSAIAGHGPEDLGIDRLVARLDGSVREVILALPATVDGQATAHYLTERLATCGVSVTRLAQGVPVGGSIEILDEGTLALALSARRAAG</sequence>
<protein>
    <recommendedName>
        <fullName evidence="1">Recombination protein RecR</fullName>
    </recommendedName>
</protein>
<proteinExistence type="inferred from homology"/>
<reference key="1">
    <citation type="submission" date="2007-05" db="EMBL/GenBank/DDBJ databases">
        <title>Complete sequence of chromosome of Acidiphilium cryptum JF-5.</title>
        <authorList>
            <consortium name="US DOE Joint Genome Institute"/>
            <person name="Copeland A."/>
            <person name="Lucas S."/>
            <person name="Lapidus A."/>
            <person name="Barry K."/>
            <person name="Detter J.C."/>
            <person name="Glavina del Rio T."/>
            <person name="Hammon N."/>
            <person name="Israni S."/>
            <person name="Dalin E."/>
            <person name="Tice H."/>
            <person name="Pitluck S."/>
            <person name="Sims D."/>
            <person name="Brettin T."/>
            <person name="Bruce D."/>
            <person name="Han C."/>
            <person name="Schmutz J."/>
            <person name="Larimer F."/>
            <person name="Land M."/>
            <person name="Hauser L."/>
            <person name="Kyrpides N."/>
            <person name="Kim E."/>
            <person name="Magnuson T."/>
            <person name="Richardson P."/>
        </authorList>
    </citation>
    <scope>NUCLEOTIDE SEQUENCE [LARGE SCALE GENOMIC DNA]</scope>
    <source>
        <strain>JF-5</strain>
    </source>
</reference>
<evidence type="ECO:0000255" key="1">
    <source>
        <dbReference type="HAMAP-Rule" id="MF_00017"/>
    </source>
</evidence>
<gene>
    <name evidence="1" type="primary">recR</name>
    <name type="ordered locus">Acry_1998</name>
</gene>
<dbReference type="EMBL" id="CP000697">
    <property type="protein sequence ID" value="ABQ31198.1"/>
    <property type="molecule type" value="Genomic_DNA"/>
</dbReference>
<dbReference type="RefSeq" id="WP_012039741.1">
    <property type="nucleotide sequence ID" value="NC_009484.1"/>
</dbReference>
<dbReference type="SMR" id="A5G016"/>
<dbReference type="STRING" id="349163.Acry_1998"/>
<dbReference type="KEGG" id="acr:Acry_1998"/>
<dbReference type="eggNOG" id="COG0353">
    <property type="taxonomic scope" value="Bacteria"/>
</dbReference>
<dbReference type="HOGENOM" id="CLU_060739_1_1_5"/>
<dbReference type="Proteomes" id="UP000000245">
    <property type="component" value="Chromosome"/>
</dbReference>
<dbReference type="GO" id="GO:0003677">
    <property type="term" value="F:DNA binding"/>
    <property type="evidence" value="ECO:0007669"/>
    <property type="project" value="UniProtKB-UniRule"/>
</dbReference>
<dbReference type="GO" id="GO:0008270">
    <property type="term" value="F:zinc ion binding"/>
    <property type="evidence" value="ECO:0007669"/>
    <property type="project" value="UniProtKB-KW"/>
</dbReference>
<dbReference type="GO" id="GO:0006310">
    <property type="term" value="P:DNA recombination"/>
    <property type="evidence" value="ECO:0007669"/>
    <property type="project" value="UniProtKB-UniRule"/>
</dbReference>
<dbReference type="GO" id="GO:0006281">
    <property type="term" value="P:DNA repair"/>
    <property type="evidence" value="ECO:0007669"/>
    <property type="project" value="UniProtKB-UniRule"/>
</dbReference>
<dbReference type="CDD" id="cd01025">
    <property type="entry name" value="TOPRIM_recR"/>
    <property type="match status" value="1"/>
</dbReference>
<dbReference type="Gene3D" id="3.40.1360.10">
    <property type="match status" value="1"/>
</dbReference>
<dbReference type="Gene3D" id="6.10.250.240">
    <property type="match status" value="1"/>
</dbReference>
<dbReference type="Gene3D" id="1.10.8.420">
    <property type="entry name" value="RecR Domain 1"/>
    <property type="match status" value="1"/>
</dbReference>
<dbReference type="HAMAP" id="MF_00017">
    <property type="entry name" value="RecR"/>
    <property type="match status" value="1"/>
</dbReference>
<dbReference type="InterPro" id="IPR000093">
    <property type="entry name" value="DNA_Rcmb_RecR"/>
</dbReference>
<dbReference type="InterPro" id="IPR023627">
    <property type="entry name" value="Rcmb_RecR"/>
</dbReference>
<dbReference type="InterPro" id="IPR015967">
    <property type="entry name" value="Rcmb_RecR_Znf"/>
</dbReference>
<dbReference type="InterPro" id="IPR006171">
    <property type="entry name" value="TOPRIM_dom"/>
</dbReference>
<dbReference type="InterPro" id="IPR034137">
    <property type="entry name" value="TOPRIM_RecR"/>
</dbReference>
<dbReference type="NCBIfam" id="TIGR00615">
    <property type="entry name" value="recR"/>
    <property type="match status" value="1"/>
</dbReference>
<dbReference type="PANTHER" id="PTHR30446">
    <property type="entry name" value="RECOMBINATION PROTEIN RECR"/>
    <property type="match status" value="1"/>
</dbReference>
<dbReference type="PANTHER" id="PTHR30446:SF0">
    <property type="entry name" value="RECOMBINATION PROTEIN RECR"/>
    <property type="match status" value="1"/>
</dbReference>
<dbReference type="Pfam" id="PF21175">
    <property type="entry name" value="RecR_C"/>
    <property type="match status" value="1"/>
</dbReference>
<dbReference type="Pfam" id="PF21176">
    <property type="entry name" value="RecR_HhH"/>
    <property type="match status" value="1"/>
</dbReference>
<dbReference type="Pfam" id="PF02132">
    <property type="entry name" value="RecR_ZnF"/>
    <property type="match status" value="1"/>
</dbReference>
<dbReference type="Pfam" id="PF13662">
    <property type="entry name" value="Toprim_4"/>
    <property type="match status" value="1"/>
</dbReference>
<dbReference type="SUPFAM" id="SSF111304">
    <property type="entry name" value="Recombination protein RecR"/>
    <property type="match status" value="1"/>
</dbReference>
<dbReference type="PROSITE" id="PS50880">
    <property type="entry name" value="TOPRIM"/>
    <property type="match status" value="1"/>
</dbReference>
<feature type="chain" id="PRO_0000322851" description="Recombination protein RecR">
    <location>
        <begin position="1"/>
        <end position="196"/>
    </location>
</feature>
<feature type="domain" description="Toprim" evidence="1">
    <location>
        <begin position="78"/>
        <end position="172"/>
    </location>
</feature>
<feature type="zinc finger region" description="C4-type" evidence="1">
    <location>
        <begin position="56"/>
        <end position="71"/>
    </location>
</feature>
<name>RECR_ACICJ</name>
<organism>
    <name type="scientific">Acidiphilium cryptum (strain JF-5)</name>
    <dbReference type="NCBI Taxonomy" id="349163"/>
    <lineage>
        <taxon>Bacteria</taxon>
        <taxon>Pseudomonadati</taxon>
        <taxon>Pseudomonadota</taxon>
        <taxon>Alphaproteobacteria</taxon>
        <taxon>Acetobacterales</taxon>
        <taxon>Acidocellaceae</taxon>
        <taxon>Acidiphilium</taxon>
    </lineage>
</organism>
<comment type="function">
    <text evidence="1">May play a role in DNA repair. It seems to be involved in an RecBC-independent recombinational process of DNA repair. It may act with RecF and RecO.</text>
</comment>
<comment type="similarity">
    <text evidence="1">Belongs to the RecR family.</text>
</comment>
<keyword id="KW-0227">DNA damage</keyword>
<keyword id="KW-0233">DNA recombination</keyword>
<keyword id="KW-0234">DNA repair</keyword>
<keyword id="KW-0479">Metal-binding</keyword>
<keyword id="KW-1185">Reference proteome</keyword>
<keyword id="KW-0862">Zinc</keyword>
<keyword id="KW-0863">Zinc-finger</keyword>